<comment type="similarity">
    <text evidence="1">Belongs to the UPF0502 family.</text>
</comment>
<keyword id="KW-0007">Acetylation</keyword>
<keyword id="KW-1185">Reference proteome</keyword>
<name>YCEH_SHIB3</name>
<organism>
    <name type="scientific">Shigella boydii serotype 18 (strain CDC 3083-94 / BS512)</name>
    <dbReference type="NCBI Taxonomy" id="344609"/>
    <lineage>
        <taxon>Bacteria</taxon>
        <taxon>Pseudomonadati</taxon>
        <taxon>Pseudomonadota</taxon>
        <taxon>Gammaproteobacteria</taxon>
        <taxon>Enterobacterales</taxon>
        <taxon>Enterobacteriaceae</taxon>
        <taxon>Shigella</taxon>
    </lineage>
</organism>
<reference key="1">
    <citation type="submission" date="2008-05" db="EMBL/GenBank/DDBJ databases">
        <title>Complete sequence of Shigella boydii serotype 18 strain BS512.</title>
        <authorList>
            <person name="Rasko D.A."/>
            <person name="Rosovitz M."/>
            <person name="Maurelli A.T."/>
            <person name="Myers G."/>
            <person name="Seshadri R."/>
            <person name="Cer R."/>
            <person name="Jiang L."/>
            <person name="Ravel J."/>
            <person name="Sebastian Y."/>
        </authorList>
    </citation>
    <scope>NUCLEOTIDE SEQUENCE [LARGE SCALE GENOMIC DNA]</scope>
    <source>
        <strain>CDC 3083-94 / BS512</strain>
    </source>
</reference>
<sequence>MKYQLTALEARVIGCLLEKQVTTPEQYPLSVNGVVTACNQKTNREPVMNLSESEVQEQLDNLVKRHYLRTVSGFGNRVTKYEQRFCNSEFGDLKLSAAEVALITTLLLRGAQTPGELRSRAARMYEFSDMAEVESTLEQLANREDGPFVVRLAREPGKRESRYMHLFSGEVEDQPAVTDMSNAVDGDLQARVEALEIEVAELKPRLDSLLAHLGD</sequence>
<gene>
    <name evidence="1" type="primary">yceH</name>
    <name type="ordered locus">SbBS512_E2259</name>
</gene>
<evidence type="ECO:0000255" key="1">
    <source>
        <dbReference type="HAMAP-Rule" id="MF_01584"/>
    </source>
</evidence>
<proteinExistence type="inferred from homology"/>
<dbReference type="EMBL" id="CP001063">
    <property type="protein sequence ID" value="ACD10429.1"/>
    <property type="molecule type" value="Genomic_DNA"/>
</dbReference>
<dbReference type="RefSeq" id="WP_000877115.1">
    <property type="nucleotide sequence ID" value="NC_010658.1"/>
</dbReference>
<dbReference type="SMR" id="B2TTK3"/>
<dbReference type="STRING" id="344609.SbBS512_E2259"/>
<dbReference type="KEGG" id="sbc:SbBS512_E2259"/>
<dbReference type="HOGENOM" id="CLU_057831_2_0_6"/>
<dbReference type="Proteomes" id="UP000001030">
    <property type="component" value="Chromosome"/>
</dbReference>
<dbReference type="FunFam" id="1.10.10.10:FF:000196">
    <property type="entry name" value="UPF0502 protein YceH"/>
    <property type="match status" value="1"/>
</dbReference>
<dbReference type="FunFam" id="1.10.10.10:FF:000241">
    <property type="entry name" value="UPF0502 protein YceH"/>
    <property type="match status" value="1"/>
</dbReference>
<dbReference type="Gene3D" id="1.10.10.10">
    <property type="entry name" value="Winged helix-like DNA-binding domain superfamily/Winged helix DNA-binding domain"/>
    <property type="match status" value="2"/>
</dbReference>
<dbReference type="HAMAP" id="MF_01584">
    <property type="entry name" value="UPF0502"/>
    <property type="match status" value="1"/>
</dbReference>
<dbReference type="InterPro" id="IPR007432">
    <property type="entry name" value="DUF480"/>
</dbReference>
<dbReference type="InterPro" id="IPR036388">
    <property type="entry name" value="WH-like_DNA-bd_sf"/>
</dbReference>
<dbReference type="InterPro" id="IPR036390">
    <property type="entry name" value="WH_DNA-bd_sf"/>
</dbReference>
<dbReference type="NCBIfam" id="NF008413">
    <property type="entry name" value="PRK11239.1"/>
    <property type="match status" value="1"/>
</dbReference>
<dbReference type="PANTHER" id="PTHR38768">
    <property type="entry name" value="UPF0502 PROTEIN YCEH"/>
    <property type="match status" value="1"/>
</dbReference>
<dbReference type="PANTHER" id="PTHR38768:SF1">
    <property type="entry name" value="UPF0502 PROTEIN YCEH"/>
    <property type="match status" value="1"/>
</dbReference>
<dbReference type="Pfam" id="PF04337">
    <property type="entry name" value="DUF480"/>
    <property type="match status" value="1"/>
</dbReference>
<dbReference type="SUPFAM" id="SSF46785">
    <property type="entry name" value="Winged helix' DNA-binding domain"/>
    <property type="match status" value="2"/>
</dbReference>
<protein>
    <recommendedName>
        <fullName evidence="1">UPF0502 protein YceH</fullName>
    </recommendedName>
</protein>
<feature type="chain" id="PRO_1000201259" description="UPF0502 protein YceH">
    <location>
        <begin position="1"/>
        <end position="215"/>
    </location>
</feature>
<feature type="modified residue" description="N6-acetyllysine" evidence="1">
    <location>
        <position position="80"/>
    </location>
</feature>
<accession>B2TTK3</accession>